<sequence length="1359" mass="152285">MVGEGPYLISDLDQRGRRRSFAERYDPSLKTMIPVRPCARLAPNPVDDAGLLSFATFSWLTPVMVKGYRQRLTVDTLPPLSTYDSSDTNAKRFRVLWDEEVARVGPEKASLSHVVWKFQRTRVLMDIVANILCIIMAAIGPTVLIHQILQQTERTSGKVWVGIGLCIALFATEFTKVFFWALAWAINYRTAIRLKVALSTLVFENLVSFKTLTHISVGEVLNILSSDSYSLFEAALFCPLPATIPILMVFCAAYAFFILGPTALIGISVYVIFIPVQMFMAKLNSAFRRSAILVTDKRVQTMNEFLTCIRLIKMYAWEKSFTNTIQDIRRRERKLLEKAGFVQSGNSALAPIVSTIAIVLTLSCHILLRRKLTAPVAFSVIAMFNVMKFSIAILPFSIKAMAEANVSLRRMKKILIDKSPPSYITQPEDPDTVLLLANATLTWEHEASRKSTPKKLQNQKRHLCKKQRSEAYSERSPPAKGATGPEEQSDSLKSVLHSISFVVRKGKILGICGNVGSGKSSLLAALLGQMQLQKGVVAVNGTLAYVSQQAWIFHGNVRENILFGEKYDHQRYQHTVRVCGLQKDLSNLPYGDLTEIGERGLNLSGGQRQRISLARAVYSDRQLYLLDDPLSAVDAHVGKHVFEECIKKTLRGKTVVLVTHQLQFLESCDEVILLEDGEICEKGTHKELMEERGRYAKLIHNLRGLQFKDPEHLYNAAMVEAFKESPAEREEDAGIIVLAPGNEKDEGKESETGSEFVDTKVPEHQLIQTESPQEGTVTWKTYHTYIKASGGYLLSLFTVFLFLLMIGSAAFSNWWLGLWLDKGSRMTCGPQGNRTMCEVGAVLADIGQHVYQWVYTASMVFMLVFGVTKGFVFTKTTLMASSSLHDTVFDKILKSPMSFFDTTPTGRLMNRFSKDMDELDVRLPFHAENFLQQFFMVVFILVILAAVFPAVLLVVASLAVGFFILLRIFHRGVQELKKVENVSRSPWFTHITSSMQGLGIIHAYGKKESCITYHLLYFNCALRWFALRMDVLMNILTFTVALLVTLSFSSISTSSKGLSLSYIIQLSGLLQVCVRTGTETQAKFTSVELLREYISTCVPECTHPLKVGTCPKDWPSRGEITFRDYQMRYRDNTPLVLDSLNLNIQSGQTVGIVGRTGSGKSSLGMALFRLVEPASGTIFIDEVDICILSLEDLRTKLTVIPQDPVLFVGTVRYNLDPFESHTDEMLWQVLERTFMRDTIMKLPEKLQAEVTENGENFSVGERQLLCVARALLRNSKIILLDEATASMDSKTDTLVQNTIKDAFKGCTVLTIAHRLNTVLNCDHVLVMENGKVIEFDKPEVLAEKPDSAFAMLLAAEVRL</sequence>
<accession>Q96J65</accession>
<accession>A0A8J8YUR7</accession>
<accession>Q49AL2</accession>
<accession>Q8TAF0</accession>
<accession>Q8TEY2</accession>
<dbReference type="EMBL" id="AF395908">
    <property type="protein sequence ID" value="AAL79528.1"/>
    <property type="molecule type" value="mRNA"/>
</dbReference>
<dbReference type="EMBL" id="AF395909">
    <property type="protein sequence ID" value="AAL79529.1"/>
    <property type="molecule type" value="mRNA"/>
</dbReference>
<dbReference type="EMBL" id="AF411577">
    <property type="protein sequence ID" value="AAL99900.1"/>
    <property type="molecule type" value="mRNA"/>
</dbReference>
<dbReference type="EMBL" id="AF411578">
    <property type="protein sequence ID" value="AAL99901.1"/>
    <property type="molecule type" value="mRNA"/>
</dbReference>
<dbReference type="EMBL" id="AY040220">
    <property type="protein sequence ID" value="AAK76740.1"/>
    <property type="molecule type" value="mRNA"/>
</dbReference>
<dbReference type="EMBL" id="AY196326">
    <property type="protein sequence ID" value="AAO40749.1"/>
    <property type="molecule type" value="mRNA"/>
</dbReference>
<dbReference type="EMBL" id="AC096996">
    <property type="status" value="NOT_ANNOTATED_CDS"/>
    <property type="molecule type" value="Genomic_DNA"/>
</dbReference>
<dbReference type="EMBL" id="BC036378">
    <property type="status" value="NOT_ANNOTATED_CDS"/>
    <property type="molecule type" value="mRNA"/>
</dbReference>
<dbReference type="RefSeq" id="NP_150229.2">
    <molecule id="Q96J65-1"/>
    <property type="nucleotide sequence ID" value="NM_033226.3"/>
</dbReference>
<dbReference type="SMR" id="Q96J65"/>
<dbReference type="BioGRID" id="125142">
    <property type="interactions" value="11"/>
</dbReference>
<dbReference type="FunCoup" id="Q96J65">
    <property type="interactions" value="265"/>
</dbReference>
<dbReference type="IntAct" id="Q96J65">
    <property type="interactions" value="7"/>
</dbReference>
<dbReference type="STRING" id="9606.ENSP00000311030"/>
<dbReference type="TCDB" id="3.A.1.208.29">
    <property type="family name" value="the atp-binding cassette (abc) superfamily"/>
</dbReference>
<dbReference type="GlyCosmos" id="Q96J65">
    <property type="glycosylation" value="4 sites, No reported glycans"/>
</dbReference>
<dbReference type="GlyGen" id="Q96J65">
    <property type="glycosylation" value="4 sites"/>
</dbReference>
<dbReference type="iPTMnet" id="Q96J65"/>
<dbReference type="PhosphoSitePlus" id="Q96J65"/>
<dbReference type="SwissPalm" id="Q96J65"/>
<dbReference type="BioMuta" id="ABCC12"/>
<dbReference type="DMDM" id="161788999"/>
<dbReference type="jPOST" id="Q96J65"/>
<dbReference type="MassIVE" id="Q96J65"/>
<dbReference type="PaxDb" id="9606-ENSP00000311030"/>
<dbReference type="PeptideAtlas" id="Q96J65"/>
<dbReference type="ProteomicsDB" id="76886">
    <molecule id="Q96J65-1"/>
</dbReference>
<dbReference type="ProteomicsDB" id="76887">
    <molecule id="Q96J65-2"/>
</dbReference>
<dbReference type="ProteomicsDB" id="76888">
    <molecule id="Q96J65-3"/>
</dbReference>
<dbReference type="ProteomicsDB" id="76890">
    <molecule id="Q96J65-5"/>
</dbReference>
<dbReference type="Antibodypedia" id="28132">
    <property type="antibodies" value="209 antibodies from 28 providers"/>
</dbReference>
<dbReference type="DNASU" id="94160"/>
<dbReference type="Ensembl" id="ENST00000497206.6">
    <molecule id="Q96J65-2"/>
    <property type="protein sequence ID" value="ENSP00000431232.1"/>
    <property type="gene ID" value="ENSG00000140798.17"/>
</dbReference>
<dbReference type="Ensembl" id="ENST00000529084.5">
    <molecule id="Q96J65-4"/>
    <property type="protein sequence ID" value="ENSP00000434510.1"/>
    <property type="gene ID" value="ENSG00000140798.17"/>
</dbReference>
<dbReference type="Ensembl" id="ENST00000529504.5">
    <molecule id="Q96J65-3"/>
    <property type="protein sequence ID" value="ENSP00000433333.1"/>
    <property type="gene ID" value="ENSG00000140798.17"/>
</dbReference>
<dbReference type="GeneID" id="94160"/>
<dbReference type="KEGG" id="hsa:94160"/>
<dbReference type="MANE-Select" id="ENST00000311303.8">
    <property type="protein sequence ID" value="ENSP00000311030.4"/>
    <property type="RefSeq nucleotide sequence ID" value="NM_001393797.1"/>
    <property type="RefSeq protein sequence ID" value="NP_001380726.1"/>
</dbReference>
<dbReference type="UCSC" id="uc002efc.1">
    <molecule id="Q96J65-1"/>
    <property type="organism name" value="human"/>
</dbReference>
<dbReference type="AGR" id="HGNC:14640"/>
<dbReference type="CTD" id="94160"/>
<dbReference type="DisGeNET" id="94160"/>
<dbReference type="GeneCards" id="ABCC12"/>
<dbReference type="HGNC" id="HGNC:14640">
    <property type="gene designation" value="ABCC12"/>
</dbReference>
<dbReference type="MalaCards" id="ABCC12"/>
<dbReference type="MIM" id="607041">
    <property type="type" value="gene"/>
</dbReference>
<dbReference type="neXtProt" id="NX_Q96J65"/>
<dbReference type="OpenTargets" id="ENSG00000140798"/>
<dbReference type="PharmGKB" id="PA24394"/>
<dbReference type="VEuPathDB" id="HostDB:ENSG00000140798"/>
<dbReference type="eggNOG" id="KOG0054">
    <property type="taxonomic scope" value="Eukaryota"/>
</dbReference>
<dbReference type="GeneTree" id="ENSGT00940000159578"/>
<dbReference type="HOGENOM" id="CLU_000604_27_1_1"/>
<dbReference type="InParanoid" id="Q96J65"/>
<dbReference type="OMA" id="CPQDWPS"/>
<dbReference type="OrthoDB" id="6500128at2759"/>
<dbReference type="PAN-GO" id="Q96J65">
    <property type="GO annotations" value="3 GO annotations based on evolutionary models"/>
</dbReference>
<dbReference type="PhylomeDB" id="Q96J65"/>
<dbReference type="TreeFam" id="TF105202"/>
<dbReference type="PathwayCommons" id="Q96J65"/>
<dbReference type="SignaLink" id="Q96J65"/>
<dbReference type="BioGRID-ORCS" id="94160">
    <property type="hits" value="11 hits in 1145 CRISPR screens"/>
</dbReference>
<dbReference type="GeneWiki" id="ABCC12"/>
<dbReference type="GenomeRNAi" id="94160"/>
<dbReference type="Pharos" id="Q96J65">
    <property type="development level" value="Tbio"/>
</dbReference>
<dbReference type="PRO" id="PR:Q96J65"/>
<dbReference type="Proteomes" id="UP000005640">
    <property type="component" value="Chromosome 16"/>
</dbReference>
<dbReference type="RNAct" id="Q96J65">
    <property type="molecule type" value="protein"/>
</dbReference>
<dbReference type="Bgee" id="ENSG00000140798">
    <property type="expression patterns" value="Expressed in primordial germ cell in gonad and 57 other cell types or tissues"/>
</dbReference>
<dbReference type="ExpressionAtlas" id="Q96J65">
    <property type="expression patterns" value="baseline and differential"/>
</dbReference>
<dbReference type="GO" id="GO:0005783">
    <property type="term" value="C:endoplasmic reticulum"/>
    <property type="evidence" value="ECO:0000314"/>
    <property type="project" value="UniProtKB"/>
</dbReference>
<dbReference type="GO" id="GO:0005789">
    <property type="term" value="C:endoplasmic reticulum membrane"/>
    <property type="evidence" value="ECO:0007669"/>
    <property type="project" value="UniProtKB-SubCell"/>
</dbReference>
<dbReference type="GO" id="GO:0016020">
    <property type="term" value="C:membrane"/>
    <property type="evidence" value="ECO:0000318"/>
    <property type="project" value="GO_Central"/>
</dbReference>
<dbReference type="GO" id="GO:0140359">
    <property type="term" value="F:ABC-type transporter activity"/>
    <property type="evidence" value="ECO:0007669"/>
    <property type="project" value="InterPro"/>
</dbReference>
<dbReference type="GO" id="GO:0005524">
    <property type="term" value="F:ATP binding"/>
    <property type="evidence" value="ECO:0007669"/>
    <property type="project" value="UniProtKB-KW"/>
</dbReference>
<dbReference type="GO" id="GO:0016887">
    <property type="term" value="F:ATP hydrolysis activity"/>
    <property type="evidence" value="ECO:0007669"/>
    <property type="project" value="InterPro"/>
</dbReference>
<dbReference type="GO" id="GO:0042626">
    <property type="term" value="F:ATPase-coupled transmembrane transporter activity"/>
    <property type="evidence" value="ECO:0000318"/>
    <property type="project" value="GO_Central"/>
</dbReference>
<dbReference type="GO" id="GO:0055085">
    <property type="term" value="P:transmembrane transport"/>
    <property type="evidence" value="ECO:0000318"/>
    <property type="project" value="GO_Central"/>
</dbReference>
<dbReference type="CDD" id="cd18592">
    <property type="entry name" value="ABC_6TM_MRP5_8_9_D1"/>
    <property type="match status" value="1"/>
</dbReference>
<dbReference type="CDD" id="cd18599">
    <property type="entry name" value="ABC_6TM_MRP5_8_9_D2"/>
    <property type="match status" value="1"/>
</dbReference>
<dbReference type="CDD" id="cd03250">
    <property type="entry name" value="ABCC_MRP_domain1"/>
    <property type="match status" value="1"/>
</dbReference>
<dbReference type="CDD" id="cd03244">
    <property type="entry name" value="ABCC_MRP_domain2"/>
    <property type="match status" value="1"/>
</dbReference>
<dbReference type="FunFam" id="1.20.1560.10:FF:000012">
    <property type="entry name" value="ATP binding cassette subfamily C member 5"/>
    <property type="match status" value="1"/>
</dbReference>
<dbReference type="FunFam" id="3.40.50.300:FF:001128">
    <property type="entry name" value="ATP-binding cassette sub-family C member 12"/>
    <property type="match status" value="1"/>
</dbReference>
<dbReference type="FunFam" id="3.40.50.300:FF:000074">
    <property type="entry name" value="Multidrug resistance-associated protein 5 isoform 1"/>
    <property type="match status" value="1"/>
</dbReference>
<dbReference type="FunFam" id="1.20.1560.10:FF:000015">
    <property type="entry name" value="multidrug resistance-associated protein 5 isoform X1"/>
    <property type="match status" value="1"/>
</dbReference>
<dbReference type="Gene3D" id="1.20.1560.10">
    <property type="entry name" value="ABC transporter type 1, transmembrane domain"/>
    <property type="match status" value="2"/>
</dbReference>
<dbReference type="Gene3D" id="3.40.50.300">
    <property type="entry name" value="P-loop containing nucleotide triphosphate hydrolases"/>
    <property type="match status" value="2"/>
</dbReference>
<dbReference type="InterPro" id="IPR003593">
    <property type="entry name" value="AAA+_ATPase"/>
</dbReference>
<dbReference type="InterPro" id="IPR011527">
    <property type="entry name" value="ABC1_TM_dom"/>
</dbReference>
<dbReference type="InterPro" id="IPR036640">
    <property type="entry name" value="ABC1_TM_sf"/>
</dbReference>
<dbReference type="InterPro" id="IPR003439">
    <property type="entry name" value="ABC_transporter-like_ATP-bd"/>
</dbReference>
<dbReference type="InterPro" id="IPR017871">
    <property type="entry name" value="ABC_transporter-like_CS"/>
</dbReference>
<dbReference type="InterPro" id="IPR050173">
    <property type="entry name" value="ABC_transporter_C-like"/>
</dbReference>
<dbReference type="InterPro" id="IPR027417">
    <property type="entry name" value="P-loop_NTPase"/>
</dbReference>
<dbReference type="PANTHER" id="PTHR24223">
    <property type="entry name" value="ATP-BINDING CASSETTE SUB-FAMILY C"/>
    <property type="match status" value="1"/>
</dbReference>
<dbReference type="PANTHER" id="PTHR24223:SF10">
    <property type="entry name" value="ATP-BINDING CASSETTE SUB-FAMILY C MEMBER 12"/>
    <property type="match status" value="1"/>
</dbReference>
<dbReference type="Pfam" id="PF00664">
    <property type="entry name" value="ABC_membrane"/>
    <property type="match status" value="2"/>
</dbReference>
<dbReference type="Pfam" id="PF00005">
    <property type="entry name" value="ABC_tran"/>
    <property type="match status" value="2"/>
</dbReference>
<dbReference type="SMART" id="SM00382">
    <property type="entry name" value="AAA"/>
    <property type="match status" value="2"/>
</dbReference>
<dbReference type="SUPFAM" id="SSF90123">
    <property type="entry name" value="ABC transporter transmembrane region"/>
    <property type="match status" value="2"/>
</dbReference>
<dbReference type="SUPFAM" id="SSF52540">
    <property type="entry name" value="P-loop containing nucleoside triphosphate hydrolases"/>
    <property type="match status" value="2"/>
</dbReference>
<dbReference type="PROSITE" id="PS50929">
    <property type="entry name" value="ABC_TM1F"/>
    <property type="match status" value="2"/>
</dbReference>
<dbReference type="PROSITE" id="PS00211">
    <property type="entry name" value="ABC_TRANSPORTER_1"/>
    <property type="match status" value="2"/>
</dbReference>
<dbReference type="PROSITE" id="PS50893">
    <property type="entry name" value="ABC_TRANSPORTER_2"/>
    <property type="match status" value="2"/>
</dbReference>
<protein>
    <recommendedName>
        <fullName>ATP-binding cassette sub-family C member 12</fullName>
    </recommendedName>
    <alternativeName>
        <fullName>Multidrug resistance-associated protein 9</fullName>
    </alternativeName>
</protein>
<feature type="chain" id="PRO_0000253578" description="ATP-binding cassette sub-family C member 12">
    <location>
        <begin position="1"/>
        <end position="1359"/>
    </location>
</feature>
<feature type="transmembrane region" description="Helical" evidence="3">
    <location>
        <begin position="125"/>
        <end position="145"/>
    </location>
</feature>
<feature type="transmembrane region" description="Helical" evidence="3">
    <location>
        <begin position="159"/>
        <end position="179"/>
    </location>
</feature>
<feature type="transmembrane region" description="Helical" evidence="3">
    <location>
        <begin position="231"/>
        <end position="251"/>
    </location>
</feature>
<feature type="transmembrane region" description="Helical" evidence="3">
    <location>
        <begin position="256"/>
        <end position="276"/>
    </location>
</feature>
<feature type="transmembrane region" description="Helical" evidence="3">
    <location>
        <begin position="348"/>
        <end position="368"/>
    </location>
</feature>
<feature type="transmembrane region" description="Helical" evidence="3">
    <location>
        <begin position="376"/>
        <end position="396"/>
    </location>
</feature>
<feature type="transmembrane region" description="Helical" evidence="3">
    <location>
        <begin position="791"/>
        <end position="811"/>
    </location>
</feature>
<feature type="transmembrane region" description="Helical" evidence="3">
    <location>
        <begin position="853"/>
        <end position="873"/>
    </location>
</feature>
<feature type="transmembrane region" description="Helical" evidence="3">
    <location>
        <begin position="934"/>
        <end position="954"/>
    </location>
</feature>
<feature type="transmembrane region" description="Helical" evidence="3">
    <location>
        <begin position="1031"/>
        <end position="1051"/>
    </location>
</feature>
<feature type="domain" description="ABC transmembrane type-1 1" evidence="3">
    <location>
        <begin position="123"/>
        <end position="403"/>
    </location>
</feature>
<feature type="domain" description="ABC transporter 1" evidence="2">
    <location>
        <begin position="467"/>
        <end position="701"/>
    </location>
</feature>
<feature type="domain" description="ABC transmembrane type-1 2" evidence="3">
    <location>
        <begin position="795"/>
        <end position="1082"/>
    </location>
</feature>
<feature type="domain" description="ABC transporter 2" evidence="2">
    <location>
        <begin position="1120"/>
        <end position="1354"/>
    </location>
</feature>
<feature type="region of interest" description="Disordered" evidence="4">
    <location>
        <begin position="446"/>
        <end position="491"/>
    </location>
</feature>
<feature type="compositionally biased region" description="Basic residues" evidence="4">
    <location>
        <begin position="451"/>
        <end position="466"/>
    </location>
</feature>
<feature type="binding site" evidence="2">
    <location>
        <begin position="513"/>
        <end position="520"/>
    </location>
    <ligand>
        <name>ATP</name>
        <dbReference type="ChEBI" id="CHEBI:30616"/>
        <label>1</label>
    </ligand>
</feature>
<feature type="binding site" evidence="2">
    <location>
        <begin position="1154"/>
        <end position="1161"/>
    </location>
    <ligand>
        <name>ATP</name>
        <dbReference type="ChEBI" id="CHEBI:30616"/>
        <label>2</label>
    </ligand>
</feature>
<feature type="glycosylation site" description="N-linked (GlcNAc...) asparagine" evidence="1">
    <location>
        <position position="405"/>
    </location>
</feature>
<feature type="glycosylation site" description="N-linked (GlcNAc...) asparagine" evidence="1">
    <location>
        <position position="438"/>
    </location>
</feature>
<feature type="glycosylation site" description="N-linked (GlcNAc...) asparagine" evidence="1">
    <location>
        <position position="540"/>
    </location>
</feature>
<feature type="glycosylation site" description="N-linked (GlcNAc...) asparagine" evidence="1">
    <location>
        <position position="981"/>
    </location>
</feature>
<feature type="splice variant" id="VSP_021085" description="In isoform 5." evidence="10">
    <location>
        <begin position="220"/>
        <end position="277"/>
    </location>
</feature>
<feature type="splice variant" id="VSP_021086" description="In isoform 4." evidence="11">
    <original>YQHTVRVCGLQKDLSNLPYGDLTEIGERGLNLSGGQRQRISLARAVYSDRQLYLLDDPLSAV</original>
    <variation>LGSGASTSLGGRGRGLAWPALSTPTVSSTCWTTPCRPWTPTWGSTSLRSALRRRSGERQSSW</variation>
    <location>
        <begin position="572"/>
        <end position="633"/>
    </location>
</feature>
<feature type="splice variant" id="VSP_021087" description="In isoform 4." evidence="11">
    <location>
        <begin position="634"/>
        <end position="1359"/>
    </location>
</feature>
<feature type="splice variant" id="VSP_021088" description="In isoform 2 and isoform 3." evidence="9">
    <location>
        <begin position="734"/>
        <end position="736"/>
    </location>
</feature>
<feature type="splice variant" id="VSP_021089" description="In isoform 5." evidence="10">
    <location>
        <begin position="737"/>
        <end position="760"/>
    </location>
</feature>
<feature type="splice variant" id="VSP_021090" description="In isoform 3." evidence="9">
    <original>ILKSPMSFFDTTPTGRLMNRFSKDMDELDVRLPFHAENFLQQFFMVV</original>
    <variation>HFPQRSPGAQEGGECQPVTLVHPHHLLHAGPGHHSRLWQEGELHHLV</variation>
    <location>
        <begin position="892"/>
        <end position="938"/>
    </location>
</feature>
<feature type="splice variant" id="VSP_021091" description="In isoform 3." evidence="9">
    <location>
        <begin position="939"/>
        <end position="1359"/>
    </location>
</feature>
<feature type="splice variant" id="VSP_021092" description="In isoform 2 and isoform 5." evidence="9 10">
    <location>
        <begin position="1013"/>
        <end position="1359"/>
    </location>
</feature>
<feature type="sequence variant" id="VAR_028392" description="In dbSNP:rs16945901.">
    <original>I</original>
    <variation>L</variation>
    <location>
        <position position="9"/>
    </location>
</feature>
<feature type="sequence variant" id="VAR_028393" description="In dbSNP:rs16945874.">
    <original>A</original>
    <variation>E</variation>
    <location>
        <position position="102"/>
    </location>
</feature>
<feature type="sequence variant" id="VAR_028394" description="In dbSNP:rs16945816.">
    <original>N</original>
    <variation>Y</variation>
    <location>
        <position position="587"/>
    </location>
</feature>
<feature type="sequence variant" id="VAR_048139" description="In dbSNP:rs34135219.">
    <original>E</original>
    <variation>V</variation>
    <location>
        <position position="690"/>
    </location>
</feature>
<feature type="sequence variant" id="VAR_028395" description="In dbSNP:rs8057474.">
    <original>K</original>
    <variation>M</variation>
    <location>
        <position position="894"/>
    </location>
</feature>
<feature type="sequence variant" id="VAR_028396" description="In dbSNP:rs6500305.">
    <original>T</original>
    <variation>S</variation>
    <location>
        <position position="989"/>
    </location>
</feature>
<feature type="sequence variant" id="VAR_028397" description="In dbSNP:rs6500304.">
    <original>Y</original>
    <variation>H</variation>
    <location>
        <position position="1013"/>
    </location>
</feature>
<feature type="sequence variant" id="VAR_028398" description="In dbSNP:rs7193955." evidence="5">
    <original>R</original>
    <variation>C</variation>
    <location>
        <position position="1117"/>
    </location>
</feature>
<feature type="sequence variant" id="VAR_048140" description="In dbSNP:rs34106426.">
    <original>I</original>
    <variation>T</variation>
    <location>
        <position position="1187"/>
    </location>
</feature>
<feature type="sequence variant" id="VAR_028399" description="In dbSNP:rs16945787.">
    <original>E</original>
    <variation>A</variation>
    <location>
        <position position="1191"/>
    </location>
</feature>
<feature type="sequence variant" id="VAR_028400" description="In dbSNP:rs12373105.">
    <original>F</original>
    <variation>L</variation>
    <location>
        <position position="1349"/>
    </location>
</feature>
<feature type="sequence conflict" description="In Ref. 5; BC036378." evidence="12" ref="5">
    <original>T</original>
    <variation>A</variation>
    <location>
        <position position="73"/>
    </location>
</feature>
<feature type="sequence conflict" description="In Ref. 2; AAK76740." evidence="12" ref="2">
    <original>TV</original>
    <variation>VI</variation>
    <location>
        <begin position="142"/>
        <end position="143"/>
    </location>
</feature>
<feature type="sequence conflict" description="In Ref. 1; AAL79528/AAL79529/AAL99900/AAL99901." evidence="12" ref="1">
    <original>SRK</original>
    <variation>RQE</variation>
    <location>
        <begin position="448"/>
        <end position="450"/>
    </location>
</feature>
<feature type="sequence conflict" description="In Ref. 1; AAL79528/AAL79529/AAL99900/AAL99901." evidence="12" ref="1">
    <original>W</original>
    <variation>R</variation>
    <location>
        <position position="853"/>
    </location>
</feature>
<name>MRP9_HUMAN</name>
<proteinExistence type="evidence at protein level"/>
<evidence type="ECO:0000255" key="1"/>
<evidence type="ECO:0000255" key="2">
    <source>
        <dbReference type="PROSITE-ProRule" id="PRU00434"/>
    </source>
</evidence>
<evidence type="ECO:0000255" key="3">
    <source>
        <dbReference type="PROSITE-ProRule" id="PRU00441"/>
    </source>
</evidence>
<evidence type="ECO:0000256" key="4">
    <source>
        <dbReference type="SAM" id="MobiDB-lite"/>
    </source>
</evidence>
<evidence type="ECO:0000269" key="5">
    <source>
    </source>
</evidence>
<evidence type="ECO:0000269" key="6">
    <source>
    </source>
</evidence>
<evidence type="ECO:0000269" key="7">
    <source>
    </source>
</evidence>
<evidence type="ECO:0000269" key="8">
    <source>
    </source>
</evidence>
<evidence type="ECO:0000303" key="9">
    <source>
    </source>
</evidence>
<evidence type="ECO:0000303" key="10">
    <source>
    </source>
</evidence>
<evidence type="ECO:0000303" key="11">
    <source>
    </source>
</evidence>
<evidence type="ECO:0000305" key="12"/>
<evidence type="ECO:0000305" key="13">
    <source>
    </source>
</evidence>
<reference key="1">
    <citation type="journal article" date="2001" name="Biochem. Biophys. Res. Commun.">
        <title>Multiple splicing variants of two new human ATP-binding cassette transporters, ABCC11 and ABCC12.</title>
        <authorList>
            <person name="Yabuuchi H."/>
            <person name="Shimizu H."/>
            <person name="Takayanagi S."/>
            <person name="Ishikawa T."/>
        </authorList>
    </citation>
    <scope>NUCLEOTIDE SEQUENCE [MRNA] (ISOFORMS 2 AND 3)</scope>
    <scope>TISSUE SPECIFICITY</scope>
    <scope>DEVELOPMENTAL STAGE</scope>
    <source>
        <tissue>Liver</tissue>
        <tissue>Pancreas</tissue>
        <tissue>Testis</tissue>
    </source>
</reference>
<reference key="2">
    <citation type="journal article" date="2001" name="Gene">
        <title>Two new genes from the human ATP-binding cassette transporter superfamily, ABCC11 and ABCC12, tandemly duplicated on chromosome 16q12.</title>
        <authorList>
            <person name="Tammur J."/>
            <person name="Prades C."/>
            <person name="Arnould I."/>
            <person name="Rzhetsky A."/>
            <person name="Hutchinson A."/>
            <person name="Adachi M."/>
            <person name="Schuetz J.D."/>
            <person name="Swoboda K.J."/>
            <person name="Ptacek L.J."/>
            <person name="Rosier M."/>
            <person name="Dean M."/>
            <person name="Allikmets R."/>
        </authorList>
    </citation>
    <scope>NUCLEOTIDE SEQUENCE [MRNA] (ISOFORM 1)</scope>
    <scope>VARIANT CYS-1117</scope>
    <scope>TISSUE SPECIFICITY</scope>
    <source>
        <tissue>Testis</tissue>
    </source>
</reference>
<reference key="3">
    <citation type="journal article" date="2002" name="Proc. Natl. Acad. Sci. U.S.A.">
        <title>MRP9, an unusual truncated member of the ABC transporter superfamily, is highly expressed in breast cancer.</title>
        <authorList>
            <person name="Bera T.K."/>
            <person name="Iavarone C."/>
            <person name="Kumar V."/>
            <person name="Lee S."/>
            <person name="Lee B."/>
            <person name="Pastan I."/>
        </authorList>
    </citation>
    <scope>NUCLEOTIDE SEQUENCE [MRNA] (ISOFORM 5)</scope>
    <scope>TISSUE SPECIFICITY</scope>
</reference>
<reference key="4">
    <citation type="journal article" date="2004" name="Nature">
        <title>The sequence and analysis of duplication-rich human chromosome 16.</title>
        <authorList>
            <person name="Martin J."/>
            <person name="Han C."/>
            <person name="Gordon L.A."/>
            <person name="Terry A."/>
            <person name="Prabhakar S."/>
            <person name="She X."/>
            <person name="Xie G."/>
            <person name="Hellsten U."/>
            <person name="Chan Y.M."/>
            <person name="Altherr M."/>
            <person name="Couronne O."/>
            <person name="Aerts A."/>
            <person name="Bajorek E."/>
            <person name="Black S."/>
            <person name="Blumer H."/>
            <person name="Branscomb E."/>
            <person name="Brown N.C."/>
            <person name="Bruno W.J."/>
            <person name="Buckingham J.M."/>
            <person name="Callen D.F."/>
            <person name="Campbell C.S."/>
            <person name="Campbell M.L."/>
            <person name="Campbell E.W."/>
            <person name="Caoile C."/>
            <person name="Challacombe J.F."/>
            <person name="Chasteen L.A."/>
            <person name="Chertkov O."/>
            <person name="Chi H.C."/>
            <person name="Christensen M."/>
            <person name="Clark L.M."/>
            <person name="Cohn J.D."/>
            <person name="Denys M."/>
            <person name="Detter J.C."/>
            <person name="Dickson M."/>
            <person name="Dimitrijevic-Bussod M."/>
            <person name="Escobar J."/>
            <person name="Fawcett J.J."/>
            <person name="Flowers D."/>
            <person name="Fotopulos D."/>
            <person name="Glavina T."/>
            <person name="Gomez M."/>
            <person name="Gonzales E."/>
            <person name="Goodstein D."/>
            <person name="Goodwin L.A."/>
            <person name="Grady D.L."/>
            <person name="Grigoriev I."/>
            <person name="Groza M."/>
            <person name="Hammon N."/>
            <person name="Hawkins T."/>
            <person name="Haydu L."/>
            <person name="Hildebrand C.E."/>
            <person name="Huang W."/>
            <person name="Israni S."/>
            <person name="Jett J."/>
            <person name="Jewett P.B."/>
            <person name="Kadner K."/>
            <person name="Kimball H."/>
            <person name="Kobayashi A."/>
            <person name="Krawczyk M.-C."/>
            <person name="Leyba T."/>
            <person name="Longmire J.L."/>
            <person name="Lopez F."/>
            <person name="Lou Y."/>
            <person name="Lowry S."/>
            <person name="Ludeman T."/>
            <person name="Manohar C.F."/>
            <person name="Mark G.A."/>
            <person name="McMurray K.L."/>
            <person name="Meincke L.J."/>
            <person name="Morgan J."/>
            <person name="Moyzis R.K."/>
            <person name="Mundt M.O."/>
            <person name="Munk A.C."/>
            <person name="Nandkeshwar R.D."/>
            <person name="Pitluck S."/>
            <person name="Pollard M."/>
            <person name="Predki P."/>
            <person name="Parson-Quintana B."/>
            <person name="Ramirez L."/>
            <person name="Rash S."/>
            <person name="Retterer J."/>
            <person name="Ricke D.O."/>
            <person name="Robinson D.L."/>
            <person name="Rodriguez A."/>
            <person name="Salamov A."/>
            <person name="Saunders E.H."/>
            <person name="Scott D."/>
            <person name="Shough T."/>
            <person name="Stallings R.L."/>
            <person name="Stalvey M."/>
            <person name="Sutherland R.D."/>
            <person name="Tapia R."/>
            <person name="Tesmer J.G."/>
            <person name="Thayer N."/>
            <person name="Thompson L.S."/>
            <person name="Tice H."/>
            <person name="Torney D.C."/>
            <person name="Tran-Gyamfi M."/>
            <person name="Tsai M."/>
            <person name="Ulanovsky L.E."/>
            <person name="Ustaszewska A."/>
            <person name="Vo N."/>
            <person name="White P.S."/>
            <person name="Williams A.L."/>
            <person name="Wills P.L."/>
            <person name="Wu J.-R."/>
            <person name="Wu K."/>
            <person name="Yang J."/>
            <person name="DeJong P."/>
            <person name="Bruce D."/>
            <person name="Doggett N.A."/>
            <person name="Deaven L."/>
            <person name="Schmutz J."/>
            <person name="Grimwood J."/>
            <person name="Richardson P."/>
            <person name="Rokhsar D.S."/>
            <person name="Eichler E.E."/>
            <person name="Gilna P."/>
            <person name="Lucas S.M."/>
            <person name="Myers R.M."/>
            <person name="Rubin E.M."/>
            <person name="Pennacchio L.A."/>
        </authorList>
    </citation>
    <scope>NUCLEOTIDE SEQUENCE [LARGE SCALE GENOMIC DNA]</scope>
</reference>
<reference key="5">
    <citation type="journal article" date="2004" name="Genome Res.">
        <title>The status, quality, and expansion of the NIH full-length cDNA project: the Mammalian Gene Collection (MGC).</title>
        <authorList>
            <consortium name="The MGC Project Team"/>
        </authorList>
    </citation>
    <scope>NUCLEOTIDE SEQUENCE [LARGE SCALE MRNA] (ISOFORM 4)</scope>
    <source>
        <tissue>Testis</tissue>
    </source>
</reference>
<reference key="6">
    <citation type="journal article" date="2007" name="Biochem. J.">
        <title>Multidrug resistance-associated protein 9 (ABCC12) is present in mouse and boar sperm.</title>
        <authorList>
            <person name="Ono N."/>
            <person name="Van der Heijden I."/>
            <person name="Scheffer G.L."/>
            <person name="Van de Wetering K."/>
            <person name="Van Deemter E."/>
            <person name="De Haas M."/>
            <person name="Boerke A."/>
            <person name="Gadella B.M."/>
            <person name="De Rooij D.G."/>
            <person name="Neefjes J.J."/>
            <person name="Groothuis T.A."/>
            <person name="Oomen L."/>
            <person name="Brocks L."/>
            <person name="Ishikawa T."/>
            <person name="Borst P."/>
        </authorList>
    </citation>
    <scope>TISSUE SPECIFICITY</scope>
    <scope>SUBCELLULAR LOCATION</scope>
    <scope>CAUTION</scope>
</reference>
<keyword id="KW-0025">Alternative splicing</keyword>
<keyword id="KW-0067">ATP-binding</keyword>
<keyword id="KW-0256">Endoplasmic reticulum</keyword>
<keyword id="KW-0325">Glycoprotein</keyword>
<keyword id="KW-0472">Membrane</keyword>
<keyword id="KW-0547">Nucleotide-binding</keyword>
<keyword id="KW-1267">Proteomics identification</keyword>
<keyword id="KW-1185">Reference proteome</keyword>
<keyword id="KW-0677">Repeat</keyword>
<keyword id="KW-0812">Transmembrane</keyword>
<keyword id="KW-1133">Transmembrane helix</keyword>
<keyword id="KW-0813">Transport</keyword>
<organism>
    <name type="scientific">Homo sapiens</name>
    <name type="common">Human</name>
    <dbReference type="NCBI Taxonomy" id="9606"/>
    <lineage>
        <taxon>Eukaryota</taxon>
        <taxon>Metazoa</taxon>
        <taxon>Chordata</taxon>
        <taxon>Craniata</taxon>
        <taxon>Vertebrata</taxon>
        <taxon>Euteleostomi</taxon>
        <taxon>Mammalia</taxon>
        <taxon>Eutheria</taxon>
        <taxon>Euarchontoglires</taxon>
        <taxon>Primates</taxon>
        <taxon>Haplorrhini</taxon>
        <taxon>Catarrhini</taxon>
        <taxon>Hominidae</taxon>
        <taxon>Homo</taxon>
    </lineage>
</organism>
<comment type="function">
    <text evidence="13">Probable transporter, its substrate specificity is unknown.</text>
</comment>
<comment type="subcellular location">
    <subcellularLocation>
        <location evidence="13">Endoplasmic reticulum membrane</location>
        <topology evidence="3">Multi-pass membrane protein</topology>
    </subcellularLocation>
</comment>
<comment type="alternative products">
    <event type="alternative splicing"/>
    <isoform>
        <id>Q96J65-1</id>
        <name>1</name>
        <sequence type="displayed"/>
    </isoform>
    <isoform>
        <id>Q96J65-2</id>
        <name>2</name>
        <name>A</name>
        <name>C</name>
        <name>D</name>
        <sequence type="described" ref="VSP_021088 VSP_021092"/>
    </isoform>
    <isoform>
        <id>Q96J65-3</id>
        <name>3</name>
        <name>B</name>
        <sequence type="described" ref="VSP_021088 VSP_021090 VSP_021091"/>
    </isoform>
    <isoform>
        <id>Q96J65-4</id>
        <name>4</name>
        <sequence type="described" ref="VSP_021086 VSP_021087"/>
    </isoform>
    <isoform>
        <id>Q96J65-5</id>
        <name>5</name>
        <sequence type="described" ref="VSP_021085 VSP_021089 VSP_021092"/>
    </isoform>
</comment>
<comment type="tissue specificity">
    <text evidence="5 6 7 8">Expressed in testis (at protein level). Widely expressed at low level (PubMed:11483364, PubMed:11688999, PubMed:12011458, PubMed:17472575). Isoform 5 is specifically expressed in brain, testis and breast cancer cells (PubMed:11483364, PubMed:11688999, PubMed:12011458).</text>
</comment>
<comment type="developmental stage">
    <text evidence="6">Expressed in fetal tissues.</text>
</comment>
<comment type="miscellaneous">
    <molecule>Isoform 2</molecule>
    <text evidence="12">May be produced at very low levels due to a premature stop codon in the mRNA, leading to nonsense-mediated mRNA decay.</text>
</comment>
<comment type="miscellaneous">
    <molecule>Isoform 3</molecule>
    <text evidence="12">May be produced at very low levels due to a premature stop codon in the mRNA, leading to nonsense-mediated mRNA decay.</text>
</comment>
<comment type="miscellaneous">
    <molecule>Isoform 4</molecule>
    <text evidence="12">May be produced at very low levels due to a premature stop codon in the mRNA, leading to nonsense-mediated mRNA decay.</text>
</comment>
<comment type="miscellaneous">
    <molecule>Isoform 5</molecule>
    <text evidence="12">May be produced at very low levels due to a premature stop codon in the mRNA, leading to nonsense-mediated mRNA decay.</text>
</comment>
<comment type="similarity">
    <text evidence="12">Belongs to the ABC transporter superfamily. ABCC family. Conjugate transporter (TC 3.A.1.208) subfamily.</text>
</comment>
<comment type="caution">
    <text evidence="8">Does not transport any of the organic anions transported by the other multidrug resistance-associated proteins (MRPs) in vesicular transport assays, nor does it confer resistance to cytotoxic agents in intact cell assays.</text>
</comment>
<comment type="online information" name="ABCMdb">
    <link uri="http://abcm2.hegelab.org/search"/>
    <text>Database for mutations in ABC proteins</text>
</comment>
<gene>
    <name type="primary">ABCC12</name>
    <name type="synonym">MRP9</name>
</gene>